<comment type="function">
    <text evidence="1">Peptide chain release factor 1 directs the termination of translation in response to the peptide chain termination codons UAG and UAA.</text>
</comment>
<comment type="subcellular location">
    <subcellularLocation>
        <location evidence="1">Cytoplasm</location>
    </subcellularLocation>
</comment>
<comment type="PTM">
    <text evidence="1">Methylated by PrmC. Methylation increases the termination efficiency of RF1.</text>
</comment>
<comment type="similarity">
    <text evidence="1">Belongs to the prokaryotic/mitochondrial release factor family.</text>
</comment>
<reference key="1">
    <citation type="journal article" date="2004" name="Nat. Genet.">
        <title>Evidence in the Legionella pneumophila genome for exploitation of host cell functions and high genome plasticity.</title>
        <authorList>
            <person name="Cazalet C."/>
            <person name="Rusniok C."/>
            <person name="Brueggemann H."/>
            <person name="Zidane N."/>
            <person name="Magnier A."/>
            <person name="Ma L."/>
            <person name="Tichit M."/>
            <person name="Jarraud S."/>
            <person name="Bouchier C."/>
            <person name="Vandenesch F."/>
            <person name="Kunst F."/>
            <person name="Etienne J."/>
            <person name="Glaser P."/>
            <person name="Buchrieser C."/>
        </authorList>
    </citation>
    <scope>NUCLEOTIDE SEQUENCE [LARGE SCALE GENOMIC DNA]</scope>
    <source>
        <strain>Paris</strain>
    </source>
</reference>
<accession>Q5X2V3</accession>
<gene>
    <name evidence="1" type="primary">prfA</name>
    <name type="ordered locus">lpp2284</name>
</gene>
<dbReference type="EMBL" id="CR628336">
    <property type="protein sequence ID" value="CAH13437.1"/>
    <property type="molecule type" value="Genomic_DNA"/>
</dbReference>
<dbReference type="RefSeq" id="WP_010948042.1">
    <property type="nucleotide sequence ID" value="NC_006368.1"/>
</dbReference>
<dbReference type="SMR" id="Q5X2V3"/>
<dbReference type="GeneID" id="57036328"/>
<dbReference type="KEGG" id="lpp:lpp2284"/>
<dbReference type="LegioList" id="lpp2284"/>
<dbReference type="HOGENOM" id="CLU_036856_0_1_6"/>
<dbReference type="GO" id="GO:0005737">
    <property type="term" value="C:cytoplasm"/>
    <property type="evidence" value="ECO:0007669"/>
    <property type="project" value="UniProtKB-SubCell"/>
</dbReference>
<dbReference type="GO" id="GO:0016149">
    <property type="term" value="F:translation release factor activity, codon specific"/>
    <property type="evidence" value="ECO:0007669"/>
    <property type="project" value="UniProtKB-UniRule"/>
</dbReference>
<dbReference type="FunFam" id="3.30.160.20:FF:000004">
    <property type="entry name" value="Peptide chain release factor 1"/>
    <property type="match status" value="1"/>
</dbReference>
<dbReference type="FunFam" id="3.30.70.1660:FF:000002">
    <property type="entry name" value="Peptide chain release factor 1"/>
    <property type="match status" value="1"/>
</dbReference>
<dbReference type="FunFam" id="3.30.70.1660:FF:000004">
    <property type="entry name" value="Peptide chain release factor 1"/>
    <property type="match status" value="1"/>
</dbReference>
<dbReference type="Gene3D" id="3.30.160.20">
    <property type="match status" value="1"/>
</dbReference>
<dbReference type="Gene3D" id="3.30.70.1660">
    <property type="match status" value="1"/>
</dbReference>
<dbReference type="Gene3D" id="6.10.140.1950">
    <property type="match status" value="1"/>
</dbReference>
<dbReference type="HAMAP" id="MF_00093">
    <property type="entry name" value="Rel_fac_1"/>
    <property type="match status" value="1"/>
</dbReference>
<dbReference type="InterPro" id="IPR005139">
    <property type="entry name" value="PCRF"/>
</dbReference>
<dbReference type="InterPro" id="IPR000352">
    <property type="entry name" value="Pep_chain_release_fac_I"/>
</dbReference>
<dbReference type="InterPro" id="IPR045853">
    <property type="entry name" value="Pep_chain_release_fac_I_sf"/>
</dbReference>
<dbReference type="InterPro" id="IPR050057">
    <property type="entry name" value="Prokaryotic/Mito_RF"/>
</dbReference>
<dbReference type="InterPro" id="IPR004373">
    <property type="entry name" value="RF-1"/>
</dbReference>
<dbReference type="NCBIfam" id="TIGR00019">
    <property type="entry name" value="prfA"/>
    <property type="match status" value="1"/>
</dbReference>
<dbReference type="NCBIfam" id="NF001859">
    <property type="entry name" value="PRK00591.1"/>
    <property type="match status" value="1"/>
</dbReference>
<dbReference type="PANTHER" id="PTHR43804">
    <property type="entry name" value="LD18447P"/>
    <property type="match status" value="1"/>
</dbReference>
<dbReference type="PANTHER" id="PTHR43804:SF7">
    <property type="entry name" value="LD18447P"/>
    <property type="match status" value="1"/>
</dbReference>
<dbReference type="Pfam" id="PF03462">
    <property type="entry name" value="PCRF"/>
    <property type="match status" value="1"/>
</dbReference>
<dbReference type="Pfam" id="PF00472">
    <property type="entry name" value="RF-1"/>
    <property type="match status" value="1"/>
</dbReference>
<dbReference type="SMART" id="SM00937">
    <property type="entry name" value="PCRF"/>
    <property type="match status" value="1"/>
</dbReference>
<dbReference type="SUPFAM" id="SSF75620">
    <property type="entry name" value="Release factor"/>
    <property type="match status" value="1"/>
</dbReference>
<dbReference type="PROSITE" id="PS00745">
    <property type="entry name" value="RF_PROK_I"/>
    <property type="match status" value="1"/>
</dbReference>
<evidence type="ECO:0000255" key="1">
    <source>
        <dbReference type="HAMAP-Rule" id="MF_00093"/>
    </source>
</evidence>
<name>RF1_LEGPA</name>
<proteinExistence type="inferred from homology"/>
<organism>
    <name type="scientific">Legionella pneumophila (strain Paris)</name>
    <dbReference type="NCBI Taxonomy" id="297246"/>
    <lineage>
        <taxon>Bacteria</taxon>
        <taxon>Pseudomonadati</taxon>
        <taxon>Pseudomonadota</taxon>
        <taxon>Gammaproteobacteria</taxon>
        <taxon>Legionellales</taxon>
        <taxon>Legionellaceae</taxon>
        <taxon>Legionella</taxon>
    </lineage>
</organism>
<keyword id="KW-0963">Cytoplasm</keyword>
<keyword id="KW-0488">Methylation</keyword>
<keyword id="KW-0648">Protein biosynthesis</keyword>
<sequence>MKKSLELKLQQMLERYEEVGRLLSEASIIADQNQFKSLSKEYAQLEPVSQCYESYLEAKNNLDSLNELLESDDKDLATMAEEEIDTVKKQIEELDEQLQWHLIPKDPDDERNIYLEVRAGTGGDEAAIFAGDLFRMYSRYAESQGWQIELISASHGEHGGYKEIIAKISGQAVYSQLKFESGAHRVQRVPETESQGRVHTSACTVAIMPEVDEINDIQINPDDLRIDTYRSSGAGGQHVNKTDSAIRITHIPTGVVVECQDERSQHKNRAKAMSLLKTRLLDAEVSKQKQEQAQTRKSLVGTGDRSERIRTYNFPQGRLTDHRINLTIYQLSDIMEGNLSLVIDPLKREYHAELLADLGRHD</sequence>
<protein>
    <recommendedName>
        <fullName evidence="1">Peptide chain release factor 1</fullName>
        <shortName evidence="1">RF-1</shortName>
    </recommendedName>
</protein>
<feature type="chain" id="PRO_0000177687" description="Peptide chain release factor 1">
    <location>
        <begin position="1"/>
        <end position="362"/>
    </location>
</feature>
<feature type="modified residue" description="N5-methylglutamine" evidence="1">
    <location>
        <position position="237"/>
    </location>
</feature>